<gene>
    <name type="primary">NACC1</name>
    <name type="synonym">BTBD14B</name>
    <name type="synonym">NAC1</name>
</gene>
<organism>
    <name type="scientific">Homo sapiens</name>
    <name type="common">Human</name>
    <dbReference type="NCBI Taxonomy" id="9606"/>
    <lineage>
        <taxon>Eukaryota</taxon>
        <taxon>Metazoa</taxon>
        <taxon>Chordata</taxon>
        <taxon>Craniata</taxon>
        <taxon>Vertebrata</taxon>
        <taxon>Euteleostomi</taxon>
        <taxon>Mammalia</taxon>
        <taxon>Eutheria</taxon>
        <taxon>Euarchontoglires</taxon>
        <taxon>Primates</taxon>
        <taxon>Haplorrhini</taxon>
        <taxon>Catarrhini</taxon>
        <taxon>Hominidae</taxon>
        <taxon>Homo</taxon>
    </lineage>
</organism>
<reference key="1">
    <citation type="submission" date="2001-06" db="EMBL/GenBank/DDBJ databases">
        <title>Human NAC1 protein, a gene transcriptional repressor.</title>
        <authorList>
            <person name="Cha X.Y."/>
            <person name="Fakharzadeh S.S."/>
        </authorList>
    </citation>
    <scope>NUCLEOTIDE SEQUENCE [MRNA]</scope>
    <source>
        <tissue>Keratinocyte</tissue>
    </source>
</reference>
<reference key="2">
    <citation type="journal article" date="2004" name="Genome Res.">
        <title>The status, quality, and expansion of the NIH full-length cDNA project: the Mammalian Gene Collection (MGC).</title>
        <authorList>
            <consortium name="The MGC Project Team"/>
        </authorList>
    </citation>
    <scope>NUCLEOTIDE SEQUENCE [LARGE SCALE MRNA]</scope>
    <source>
        <tissue>Eye</tissue>
    </source>
</reference>
<reference key="3">
    <citation type="journal article" date="2006" name="Proc. Natl. Acad. Sci. U.S.A.">
        <title>A BTB/POZ protein, NAC-1, is related to tumor recurrence and is essential for tumor growth and survival.</title>
        <authorList>
            <person name="Nakayama K."/>
            <person name="Nakayama N."/>
            <person name="Davidson B."/>
            <person name="Sheu J.-J.C."/>
            <person name="Jinawath N."/>
            <person name="Santillan A."/>
            <person name="Salani R."/>
            <person name="Bristow R.E."/>
            <person name="Morin P.J."/>
            <person name="Kurman R.J."/>
            <person name="Wang T.-L."/>
            <person name="Shih I.-M."/>
        </authorList>
    </citation>
    <scope>FUNCTION</scope>
    <scope>HOMOOLIGOMERIZATION</scope>
    <scope>TISSUE SPECIFICITY</scope>
</reference>
<reference key="4">
    <citation type="journal article" date="2007" name="Cancer Res.">
        <title>NAC-1 controls cell growth and survival by repressing transcription of Gadd45GIP1, a candidate tumor suppressor.</title>
        <authorList>
            <person name="Nakayama K."/>
            <person name="Nakayama N."/>
            <person name="Wang T.-L."/>
            <person name="Shih I.-M."/>
        </authorList>
    </citation>
    <scope>FUNCTION</scope>
</reference>
<reference key="5">
    <citation type="journal article" date="2007" name="Hum. Pathol.">
        <title>Expression and clinical role of the bric-a-brac tramtrack broad complex/poxvirus and zinc protein NAC-1 in ovarian carcinoma effusions.</title>
        <authorList>
            <person name="Davidson B."/>
            <person name="Berner A."/>
            <person name="Trope' C.G."/>
            <person name="Wang T.-L."/>
            <person name="Shih I.-M."/>
        </authorList>
    </citation>
    <scope>TISSUE SPECIFICITY</scope>
</reference>
<reference key="6">
    <citation type="journal article" date="2008" name="Proc. Natl. Acad. Sci. U.S.A.">
        <title>A quantitative atlas of mitotic phosphorylation.</title>
        <authorList>
            <person name="Dephoure N."/>
            <person name="Zhou C."/>
            <person name="Villen J."/>
            <person name="Beausoleil S.A."/>
            <person name="Bakalarski C.E."/>
            <person name="Elledge S.J."/>
            <person name="Gygi S.P."/>
        </authorList>
    </citation>
    <scope>IDENTIFICATION BY MASS SPECTROMETRY [LARGE SCALE ANALYSIS]</scope>
    <source>
        <tissue>Cervix carcinoma</tissue>
    </source>
</reference>
<reference key="7">
    <citation type="journal article" date="2009" name="Sci. Signal.">
        <title>Quantitative phosphoproteomic analysis of T cell receptor signaling reveals system-wide modulation of protein-protein interactions.</title>
        <authorList>
            <person name="Mayya V."/>
            <person name="Lundgren D.H."/>
            <person name="Hwang S.-I."/>
            <person name="Rezaul K."/>
            <person name="Wu L."/>
            <person name="Eng J.K."/>
            <person name="Rodionov V."/>
            <person name="Han D.K."/>
        </authorList>
    </citation>
    <scope>IDENTIFICATION BY MASS SPECTROMETRY [LARGE SCALE ANALYSIS]</scope>
    <source>
        <tissue>Leukemic T-cell</tissue>
    </source>
</reference>
<reference key="8">
    <citation type="journal article" date="2010" name="Sci. Signal.">
        <title>Quantitative phosphoproteomics reveals widespread full phosphorylation site occupancy during mitosis.</title>
        <authorList>
            <person name="Olsen J.V."/>
            <person name="Vermeulen M."/>
            <person name="Santamaria A."/>
            <person name="Kumar C."/>
            <person name="Miller M.L."/>
            <person name="Jensen L.J."/>
            <person name="Gnad F."/>
            <person name="Cox J."/>
            <person name="Jensen T.S."/>
            <person name="Nigg E.A."/>
            <person name="Brunak S."/>
            <person name="Mann M."/>
        </authorList>
    </citation>
    <scope>PHOSPHORYLATION [LARGE SCALE ANALYSIS] AT SER-188</scope>
    <scope>IDENTIFICATION BY MASS SPECTROMETRY [LARGE SCALE ANALYSIS]</scope>
    <source>
        <tissue>Cervix carcinoma</tissue>
    </source>
</reference>
<reference key="9">
    <citation type="journal article" date="2011" name="BMC Syst. Biol.">
        <title>Initial characterization of the human central proteome.</title>
        <authorList>
            <person name="Burkard T.R."/>
            <person name="Planyavsky M."/>
            <person name="Kaupe I."/>
            <person name="Breitwieser F.P."/>
            <person name="Buerckstuemmer T."/>
            <person name="Bennett K.L."/>
            <person name="Superti-Furga G."/>
            <person name="Colinge J."/>
        </authorList>
    </citation>
    <scope>IDENTIFICATION BY MASS SPECTROMETRY [LARGE SCALE ANALYSIS]</scope>
</reference>
<reference key="10">
    <citation type="journal article" date="2013" name="J. Proteome Res.">
        <title>Toward a comprehensive characterization of a human cancer cell phosphoproteome.</title>
        <authorList>
            <person name="Zhou H."/>
            <person name="Di Palma S."/>
            <person name="Preisinger C."/>
            <person name="Peng M."/>
            <person name="Polat A.N."/>
            <person name="Heck A.J."/>
            <person name="Mohammed S."/>
        </authorList>
    </citation>
    <scope>IDENTIFICATION BY MASS SPECTROMETRY [LARGE SCALE ANALYSIS]</scope>
    <source>
        <tissue>Erythroleukemia</tissue>
    </source>
</reference>
<reference key="11">
    <citation type="journal article" date="2014" name="Nat. Struct. Mol. Biol.">
        <title>Uncovering global SUMOylation signaling networks in a site-specific manner.</title>
        <authorList>
            <person name="Hendriks I.A."/>
            <person name="D'Souza R.C."/>
            <person name="Yang B."/>
            <person name="Verlaan-de Vries M."/>
            <person name="Mann M."/>
            <person name="Vertegaal A.C."/>
        </authorList>
    </citation>
    <scope>SUMOYLATION [LARGE SCALE ANALYSIS] AT LYS-167 AND LYS-483</scope>
    <scope>IDENTIFICATION BY MASS SPECTROMETRY [LARGE SCALE ANALYSIS]</scope>
</reference>
<reference key="12">
    <citation type="journal article" date="2014" name="Proc. Natl. Acad. Sci. U.S.A.">
        <title>Mapping of SUMO sites and analysis of SUMOylation changes induced by external stimuli.</title>
        <authorList>
            <person name="Impens F."/>
            <person name="Radoshevich L."/>
            <person name="Cossart P."/>
            <person name="Ribet D."/>
        </authorList>
    </citation>
    <scope>SUMOYLATION [LARGE SCALE ANALYSIS] AT LYS-167</scope>
    <scope>IDENTIFICATION BY MASS SPECTROMETRY [LARGE SCALE ANALYSIS]</scope>
</reference>
<reference key="13">
    <citation type="journal article" date="2015" name="Cell Rep.">
        <title>SUMO-2 orchestrates chromatin modifiers in response to DNA damage.</title>
        <authorList>
            <person name="Hendriks I.A."/>
            <person name="Treffers L.W."/>
            <person name="Verlaan-de Vries M."/>
            <person name="Olsen J.V."/>
            <person name="Vertegaal A.C."/>
        </authorList>
    </citation>
    <scope>SUMOYLATION [LARGE SCALE ANALYSIS] AT LYS-167 AND LYS-483</scope>
    <scope>IDENTIFICATION BY MASS SPECTROMETRY [LARGE SCALE ANALYSIS]</scope>
</reference>
<reference key="14">
    <citation type="journal article" date="2015" name="Mol. Cell. Proteomics">
        <title>System-wide analysis of SUMOylation dynamics in response to replication stress reveals novel small ubiquitin-like modified target proteins and acceptor lysines relevant for genome stability.</title>
        <authorList>
            <person name="Xiao Z."/>
            <person name="Chang J.G."/>
            <person name="Hendriks I.A."/>
            <person name="Sigurdsson J.O."/>
            <person name="Olsen J.V."/>
            <person name="Vertegaal A.C."/>
        </authorList>
    </citation>
    <scope>SUMOYLATION [LARGE SCALE ANALYSIS] AT LYS-167 AND LYS-483</scope>
    <scope>IDENTIFICATION BY MASS SPECTROMETRY [LARGE SCALE ANALYSIS]</scope>
</reference>
<reference key="15">
    <citation type="journal article" date="2017" name="Am. J. Hum. Genet.">
        <title>A recurrent de novo variant in NACC1 causes a syndrome characterized by infantile epilepsy, cataracts, and profound developmental delay.</title>
        <authorList>
            <consortium name="UCLA Clinical Genomics Center"/>
            <consortium name="Undiagnosed Diseases Network"/>
            <person name="Schoch K."/>
            <person name="Meng L."/>
            <person name="Szelinger S."/>
            <person name="Bearden D.R."/>
            <person name="Stray-Pedersen A."/>
            <person name="Busk O.L."/>
            <person name="Stong N."/>
            <person name="Liston E."/>
            <person name="Cohn R.D."/>
            <person name="Scaglia F."/>
            <person name="Rosenfeld J.A."/>
            <person name="Tarpinian J."/>
            <person name="Skraban C.M."/>
            <person name="Deardorff M.A."/>
            <person name="Friedman J.N."/>
            <person name="Akdemir Z.C."/>
            <person name="Walley N."/>
            <person name="Mikati M.A."/>
            <person name="Kranz P.G."/>
            <person name="Jasien J."/>
            <person name="McConkie-Rosell A."/>
            <person name="McDonald M."/>
            <person name="Wechsler S.B."/>
            <person name="Freemark M."/>
            <person name="Kansagra S."/>
            <person name="Freedman S."/>
            <person name="Bali D."/>
            <person name="Millan F."/>
            <person name="Bale S."/>
            <person name="Nelson S.F."/>
            <person name="Lee H."/>
            <person name="Dorrani N."/>
            <person name="Goldstein D.B."/>
            <person name="Xiao R."/>
            <person name="Yang Y."/>
            <person name="Posey J.E."/>
            <person name="Martinez-Agosto J.A."/>
            <person name="Lupski J.R."/>
            <person name="Wangler M.F."/>
            <person name="Shashi V."/>
        </authorList>
    </citation>
    <scope>INVOLVEMENT IN NECFM</scope>
    <scope>VARIANT NECFM TRP-298</scope>
</reference>
<reference key="16">
    <citation type="journal article" date="2017" name="Nat. Struct. Mol. Biol.">
        <title>Site-specific mapping of the human SUMO proteome reveals co-modification with phosphorylation.</title>
        <authorList>
            <person name="Hendriks I.A."/>
            <person name="Lyon D."/>
            <person name="Young C."/>
            <person name="Jensen L.J."/>
            <person name="Vertegaal A.C."/>
            <person name="Nielsen M.L."/>
        </authorList>
    </citation>
    <scope>SUMOYLATION [LARGE SCALE ANALYSIS] AT LYS-167; LYS-183; LYS-318; LYS-452; LYS-480; LYS-483 AND LYS-498</scope>
    <scope>IDENTIFICATION BY MASS SPECTROMETRY [LARGE SCALE ANALYSIS]</scope>
</reference>
<reference key="17">
    <citation type="journal article" date="2009" name="Acta Crystallogr. F">
        <title>Structure of the human Nac1 POZ domain.</title>
        <authorList>
            <person name="Stead M.A."/>
            <person name="Carr S.B."/>
            <person name="Wright S.C."/>
        </authorList>
    </citation>
    <scope>X-RAY CRYSTALLOGRAPHY (2.1 ANGSTROMS) OF 2-125</scope>
</reference>
<name>NACC1_HUMAN</name>
<sequence length="527" mass="57258">MAQTLQMEIPNFGNSILECLNEQRLQGLYCDVSVVVKGHAFKAHRAVLAASSSYFRDLFNNSRSAVVELPAAVQPQSFQQILSFCYTGRLSMNVGDQFLLMYTAGFLQIQEIMEKGTEFFLKVSSPSCDSQGLHAEEAPSSEPQSPVAQTSGWPACSTPLPLVSRVKTEQQESDSVQCMPVAKRLWDSGQKEAGGGGNGSRKMAKFSTPDLAANRPHQPPPPQQAPVVAAAQPAVAAGAGQPAGGVAAAGGVVSGPSTSERTSPGTSSAYTSDSPGSYHNEEDEEEDGGEEGMDEQYRQICNMYTMYSMMNVGQTAEKVEALPEQVAPESRNRIRVRQDLASLPAELINQIGNRCHPKLYDEGDPSEKLELVTGTNVYITRAQLMNCHVSAGTRHKVLLRRLLASFFDRNTLANSCGTGIRSSTNDPRRKPLDSRVLHAVKYYCQNFAPNFKESEMNAIAADMCTNARRVVRKSWMPKVKVLKAEDDAYTTFISETGKIEPDMMGVEHGFETASHEGEAGPSAEALQ</sequence>
<keyword id="KW-0002">3D-structure</keyword>
<keyword id="KW-0963">Cytoplasm</keyword>
<keyword id="KW-0225">Disease variant</keyword>
<keyword id="KW-0887">Epilepsy</keyword>
<keyword id="KW-0991">Intellectual disability</keyword>
<keyword id="KW-1017">Isopeptide bond</keyword>
<keyword id="KW-0539">Nucleus</keyword>
<keyword id="KW-0597">Phosphoprotein</keyword>
<keyword id="KW-1267">Proteomics identification</keyword>
<keyword id="KW-1185">Reference proteome</keyword>
<keyword id="KW-0678">Repressor</keyword>
<keyword id="KW-0804">Transcription</keyword>
<keyword id="KW-0805">Transcription regulation</keyword>
<keyword id="KW-0832">Ubl conjugation</keyword>
<evidence type="ECO:0000250" key="1"/>
<evidence type="ECO:0000250" key="2">
    <source>
        <dbReference type="UniProtKB" id="O35260"/>
    </source>
</evidence>
<evidence type="ECO:0000255" key="3">
    <source>
        <dbReference type="PROSITE-ProRule" id="PRU00037"/>
    </source>
</evidence>
<evidence type="ECO:0000255" key="4">
    <source>
        <dbReference type="PROSITE-ProRule" id="PRU00784"/>
    </source>
</evidence>
<evidence type="ECO:0000256" key="5">
    <source>
        <dbReference type="SAM" id="MobiDB-lite"/>
    </source>
</evidence>
<evidence type="ECO:0000269" key="6">
    <source>
    </source>
</evidence>
<evidence type="ECO:0000269" key="7">
    <source>
    </source>
</evidence>
<evidence type="ECO:0000269" key="8">
    <source>
    </source>
</evidence>
<evidence type="ECO:0000269" key="9">
    <source>
    </source>
</evidence>
<evidence type="ECO:0007744" key="10">
    <source>
    </source>
</evidence>
<evidence type="ECO:0007744" key="11">
    <source>
    </source>
</evidence>
<evidence type="ECO:0007744" key="12">
    <source>
    </source>
</evidence>
<evidence type="ECO:0007744" key="13">
    <source>
    </source>
</evidence>
<evidence type="ECO:0007744" key="14">
    <source>
    </source>
</evidence>
<evidence type="ECO:0007744" key="15">
    <source>
    </source>
</evidence>
<evidence type="ECO:0007829" key="16">
    <source>
        <dbReference type="PDB" id="3GA1"/>
    </source>
</evidence>
<evidence type="ECO:0007829" key="17">
    <source>
        <dbReference type="PDB" id="4U2N"/>
    </source>
</evidence>
<evidence type="ECO:0007829" key="18">
    <source>
        <dbReference type="PDB" id="7BV9"/>
    </source>
</evidence>
<evidence type="ECO:0007829" key="19">
    <source>
        <dbReference type="PDB" id="8YZS"/>
    </source>
</evidence>
<protein>
    <recommendedName>
        <fullName>Nucleus accumbens-associated protein 1</fullName>
        <shortName>NAC-1</shortName>
    </recommendedName>
    <alternativeName>
        <fullName>BTB/POZ domain-containing protein 14B</fullName>
    </alternativeName>
</protein>
<accession>Q96RE7</accession>
<feature type="chain" id="PRO_0000274041" description="Nucleus accumbens-associated protein 1">
    <location>
        <begin position="1"/>
        <end position="527"/>
    </location>
</feature>
<feature type="domain" description="BTB" evidence="3">
    <location>
        <begin position="30"/>
        <end position="94"/>
    </location>
</feature>
<feature type="domain" description="BEN" evidence="4">
    <location>
        <begin position="374"/>
        <end position="471"/>
    </location>
</feature>
<feature type="region of interest" description="Disordered" evidence="5">
    <location>
        <begin position="131"/>
        <end position="153"/>
    </location>
</feature>
<feature type="region of interest" description="Disordered" evidence="5">
    <location>
        <begin position="210"/>
        <end position="292"/>
    </location>
</feature>
<feature type="compositionally biased region" description="Polar residues" evidence="5">
    <location>
        <begin position="141"/>
        <end position="152"/>
    </location>
</feature>
<feature type="compositionally biased region" description="Low complexity" evidence="5">
    <location>
        <begin position="225"/>
        <end position="251"/>
    </location>
</feature>
<feature type="compositionally biased region" description="Polar residues" evidence="5">
    <location>
        <begin position="255"/>
        <end position="277"/>
    </location>
</feature>
<feature type="compositionally biased region" description="Acidic residues" evidence="5">
    <location>
        <begin position="281"/>
        <end position="292"/>
    </location>
</feature>
<feature type="modified residue" description="Phosphoserine" evidence="10">
    <location>
        <position position="188"/>
    </location>
</feature>
<feature type="modified residue" description="Phosphoserine; by PKC" evidence="2">
    <location>
        <position position="259"/>
    </location>
</feature>
<feature type="cross-link" description="Glycyl lysine isopeptide (Lys-Gly) (interchain with G-Cter in SUMO1); alternate" evidence="11">
    <location>
        <position position="167"/>
    </location>
</feature>
<feature type="cross-link" description="Glycyl lysine isopeptide (Lys-Gly) (interchain with G-Cter in SUMO2); alternate" evidence="11 12 13 14 15">
    <location>
        <position position="167"/>
    </location>
</feature>
<feature type="cross-link" description="Glycyl lysine isopeptide (Lys-Gly) (interchain with G-Cter in SUMO2)" evidence="15">
    <location>
        <position position="183"/>
    </location>
</feature>
<feature type="cross-link" description="Glycyl lysine isopeptide (Lys-Gly) (interchain with G-Cter in SUMO2)" evidence="15">
    <location>
        <position position="318"/>
    </location>
</feature>
<feature type="cross-link" description="Glycyl lysine isopeptide (Lys-Gly) (interchain with G-Cter in SUMO2)" evidence="15">
    <location>
        <position position="452"/>
    </location>
</feature>
<feature type="cross-link" description="Glycyl lysine isopeptide (Lys-Gly) (interchain with G-Cter in SUMO2)" evidence="15">
    <location>
        <position position="480"/>
    </location>
</feature>
<feature type="cross-link" description="Glycyl lysine isopeptide (Lys-Gly) (interchain with G-Cter in SUMO2)" evidence="12 13 14 15">
    <location>
        <position position="483"/>
    </location>
</feature>
<feature type="cross-link" description="Glycyl lysine isopeptide (Lys-Gly) (interchain with G-Cter in SUMO2)" evidence="15">
    <location>
        <position position="498"/>
    </location>
</feature>
<feature type="sequence variant" id="VAR_078808" description="In NECFM; dbSNP:rs1060505041." evidence="9">
    <original>R</original>
    <variation>W</variation>
    <location>
        <position position="298"/>
    </location>
</feature>
<feature type="strand" evidence="16">
    <location>
        <begin position="4"/>
        <end position="8"/>
    </location>
</feature>
<feature type="helix" evidence="16">
    <location>
        <begin position="12"/>
        <end position="25"/>
    </location>
</feature>
<feature type="turn" evidence="17">
    <location>
        <begin position="26"/>
        <end position="29"/>
    </location>
</feature>
<feature type="strand" evidence="16">
    <location>
        <begin position="32"/>
        <end position="36"/>
    </location>
</feature>
<feature type="strand" evidence="16">
    <location>
        <begin position="39"/>
        <end position="43"/>
    </location>
</feature>
<feature type="helix" evidence="16">
    <location>
        <begin position="45"/>
        <end position="51"/>
    </location>
</feature>
<feature type="helix" evidence="16">
    <location>
        <begin position="53"/>
        <end position="61"/>
    </location>
</feature>
<feature type="strand" evidence="16">
    <location>
        <begin position="65"/>
        <end position="68"/>
    </location>
</feature>
<feature type="helix" evidence="16">
    <location>
        <begin position="75"/>
        <end position="87"/>
    </location>
</feature>
<feature type="strand" evidence="16">
    <location>
        <begin position="88"/>
        <end position="91"/>
    </location>
</feature>
<feature type="turn" evidence="16">
    <location>
        <begin position="94"/>
        <end position="96"/>
    </location>
</feature>
<feature type="helix" evidence="16">
    <location>
        <begin position="97"/>
        <end position="106"/>
    </location>
</feature>
<feature type="helix" evidence="17">
    <location>
        <begin position="110"/>
        <end position="113"/>
    </location>
</feature>
<feature type="turn" evidence="19">
    <location>
        <begin position="346"/>
        <end position="349"/>
    </location>
</feature>
<feature type="helix" evidence="19">
    <location>
        <begin position="357"/>
        <end position="359"/>
    </location>
</feature>
<feature type="strand" evidence="19">
    <location>
        <begin position="360"/>
        <end position="362"/>
    </location>
</feature>
<feature type="strand" evidence="19">
    <location>
        <begin position="368"/>
        <end position="372"/>
    </location>
</feature>
<feature type="turn" evidence="18">
    <location>
        <begin position="373"/>
        <end position="375"/>
    </location>
</feature>
<feature type="strand" evidence="19">
    <location>
        <begin position="378"/>
        <end position="380"/>
    </location>
</feature>
<feature type="helix" evidence="19">
    <location>
        <begin position="381"/>
        <end position="391"/>
    </location>
</feature>
<feature type="helix" evidence="19">
    <location>
        <begin position="395"/>
        <end position="406"/>
    </location>
</feature>
<feature type="helix" evidence="19">
    <location>
        <begin position="409"/>
        <end position="413"/>
    </location>
</feature>
<feature type="strand" evidence="18">
    <location>
        <begin position="423"/>
        <end position="426"/>
    </location>
</feature>
<feature type="helix" evidence="19">
    <location>
        <begin position="434"/>
        <end position="447"/>
    </location>
</feature>
<feature type="helix" evidence="19">
    <location>
        <begin position="453"/>
        <end position="470"/>
    </location>
</feature>
<feature type="turn" evidence="18">
    <location>
        <begin position="477"/>
        <end position="480"/>
    </location>
</feature>
<dbReference type="EMBL" id="AF395817">
    <property type="protein sequence ID" value="AAK83885.1"/>
    <property type="molecule type" value="mRNA"/>
</dbReference>
<dbReference type="EMBL" id="BC055396">
    <property type="protein sequence ID" value="AAH55396.1"/>
    <property type="molecule type" value="mRNA"/>
</dbReference>
<dbReference type="CCDS" id="CCDS12294.1"/>
<dbReference type="RefSeq" id="NP_443108.1">
    <property type="nucleotide sequence ID" value="NM_052876.4"/>
</dbReference>
<dbReference type="RefSeq" id="XP_005259778.1">
    <property type="nucleotide sequence ID" value="XM_005259721.4"/>
</dbReference>
<dbReference type="RefSeq" id="XP_047294074.1">
    <property type="nucleotide sequence ID" value="XM_047438118.1"/>
</dbReference>
<dbReference type="RefSeq" id="XP_054175664.1">
    <property type="nucleotide sequence ID" value="XM_054319689.1"/>
</dbReference>
<dbReference type="RefSeq" id="XP_054175665.1">
    <property type="nucleotide sequence ID" value="XM_054319690.1"/>
</dbReference>
<dbReference type="RefSeq" id="XP_054175666.1">
    <property type="nucleotide sequence ID" value="XM_054319691.1"/>
</dbReference>
<dbReference type="PDB" id="3GA1">
    <property type="method" value="X-ray"/>
    <property type="resolution" value="2.10 A"/>
    <property type="chains" value="A/B=2-125"/>
</dbReference>
<dbReference type="PDB" id="4U2N">
    <property type="method" value="X-ray"/>
    <property type="resolution" value="2.30 A"/>
    <property type="chains" value="A/B=2-125"/>
</dbReference>
<dbReference type="PDB" id="7BV9">
    <property type="method" value="NMR"/>
    <property type="chains" value="A=322-485"/>
</dbReference>
<dbReference type="PDB" id="8YZS">
    <property type="method" value="X-ray"/>
    <property type="resolution" value="2.31 A"/>
    <property type="chains" value="A/B/C/D=341-477"/>
</dbReference>
<dbReference type="PDBsum" id="3GA1"/>
<dbReference type="PDBsum" id="4U2N"/>
<dbReference type="PDBsum" id="7BV9"/>
<dbReference type="PDBsum" id="8YZS"/>
<dbReference type="SMR" id="Q96RE7"/>
<dbReference type="BioGRID" id="125217">
    <property type="interactions" value="90"/>
</dbReference>
<dbReference type="FunCoup" id="Q96RE7">
    <property type="interactions" value="1991"/>
</dbReference>
<dbReference type="IntAct" id="Q96RE7">
    <property type="interactions" value="40"/>
</dbReference>
<dbReference type="MINT" id="Q96RE7"/>
<dbReference type="STRING" id="9606.ENSP00000292431"/>
<dbReference type="GlyGen" id="Q96RE7">
    <property type="glycosylation" value="2 sites, 1 O-linked glycan (2 sites)"/>
</dbReference>
<dbReference type="iPTMnet" id="Q96RE7"/>
<dbReference type="MetOSite" id="Q96RE7"/>
<dbReference type="PhosphoSitePlus" id="Q96RE7"/>
<dbReference type="SwissPalm" id="Q96RE7"/>
<dbReference type="BioMuta" id="NACC1"/>
<dbReference type="DMDM" id="74732694"/>
<dbReference type="jPOST" id="Q96RE7"/>
<dbReference type="MassIVE" id="Q96RE7"/>
<dbReference type="PaxDb" id="9606-ENSP00000292431"/>
<dbReference type="PeptideAtlas" id="Q96RE7"/>
<dbReference type="ProteomicsDB" id="77953"/>
<dbReference type="Pumba" id="Q96RE7"/>
<dbReference type="Antibodypedia" id="13525">
    <property type="antibodies" value="313 antibodies from 37 providers"/>
</dbReference>
<dbReference type="DNASU" id="112939"/>
<dbReference type="Ensembl" id="ENST00000292431.5">
    <property type="protein sequence ID" value="ENSP00000292431.3"/>
    <property type="gene ID" value="ENSG00000160877.7"/>
</dbReference>
<dbReference type="Ensembl" id="ENST00000586171.3">
    <property type="protein sequence ID" value="ENSP00000467120.2"/>
    <property type="gene ID" value="ENSG00000160877.7"/>
</dbReference>
<dbReference type="Ensembl" id="ENST00000700232.1">
    <property type="protein sequence ID" value="ENSP00000514870.1"/>
    <property type="gene ID" value="ENSG00000160877.7"/>
</dbReference>
<dbReference type="GeneID" id="112939"/>
<dbReference type="KEGG" id="hsa:112939"/>
<dbReference type="MANE-Select" id="ENST00000292431.5">
    <property type="protein sequence ID" value="ENSP00000292431.3"/>
    <property type="RefSeq nucleotide sequence ID" value="NM_052876.4"/>
    <property type="RefSeq protein sequence ID" value="NP_443108.1"/>
</dbReference>
<dbReference type="UCSC" id="uc002mwm.5">
    <property type="organism name" value="human"/>
</dbReference>
<dbReference type="AGR" id="HGNC:20967"/>
<dbReference type="CTD" id="112939"/>
<dbReference type="DisGeNET" id="112939"/>
<dbReference type="GeneCards" id="NACC1"/>
<dbReference type="HGNC" id="HGNC:20967">
    <property type="gene designation" value="NACC1"/>
</dbReference>
<dbReference type="HPA" id="ENSG00000160877">
    <property type="expression patterns" value="Low tissue specificity"/>
</dbReference>
<dbReference type="MalaCards" id="NACC1"/>
<dbReference type="MIM" id="610672">
    <property type="type" value="gene"/>
</dbReference>
<dbReference type="MIM" id="617393">
    <property type="type" value="phenotype"/>
</dbReference>
<dbReference type="neXtProt" id="NX_Q96RE7"/>
<dbReference type="OpenTargets" id="ENSG00000160877"/>
<dbReference type="Orphanet" id="500545">
    <property type="disease" value="Severe neurodevelopmental disorder with feeding difficulties-stereotypic hand movement-bilateral cataract"/>
</dbReference>
<dbReference type="PharmGKB" id="PA164723404"/>
<dbReference type="VEuPathDB" id="HostDB:ENSG00000160877"/>
<dbReference type="eggNOG" id="KOG1721">
    <property type="taxonomic scope" value="Eukaryota"/>
</dbReference>
<dbReference type="GeneTree" id="ENSGT00940000159327"/>
<dbReference type="HOGENOM" id="CLU_029038_1_0_1"/>
<dbReference type="InParanoid" id="Q96RE7"/>
<dbReference type="OMA" id="DMMSMEH"/>
<dbReference type="OrthoDB" id="10261408at2759"/>
<dbReference type="PAN-GO" id="Q96RE7">
    <property type="GO annotations" value="3 GO annotations based on evolutionary models"/>
</dbReference>
<dbReference type="PhylomeDB" id="Q96RE7"/>
<dbReference type="TreeFam" id="TF331184"/>
<dbReference type="PathwayCommons" id="Q96RE7"/>
<dbReference type="SignaLink" id="Q96RE7"/>
<dbReference type="SIGNOR" id="Q96RE7"/>
<dbReference type="BioGRID-ORCS" id="112939">
    <property type="hits" value="42 hits in 1193 CRISPR screens"/>
</dbReference>
<dbReference type="CD-CODE" id="B5B9A610">
    <property type="entry name" value="PML body"/>
</dbReference>
<dbReference type="ChiTaRS" id="NACC1">
    <property type="organism name" value="human"/>
</dbReference>
<dbReference type="EvolutionaryTrace" id="Q96RE7"/>
<dbReference type="GeneWiki" id="BTBD14B"/>
<dbReference type="GenomeRNAi" id="112939"/>
<dbReference type="Pharos" id="Q96RE7">
    <property type="development level" value="Tbio"/>
</dbReference>
<dbReference type="PRO" id="PR:Q96RE7"/>
<dbReference type="Proteomes" id="UP000005640">
    <property type="component" value="Chromosome 19"/>
</dbReference>
<dbReference type="RNAct" id="Q96RE7">
    <property type="molecule type" value="protein"/>
</dbReference>
<dbReference type="Bgee" id="ENSG00000160877">
    <property type="expression patterns" value="Expressed in pancreatic ductal cell and 192 other cell types or tissues"/>
</dbReference>
<dbReference type="ExpressionAtlas" id="Q96RE7">
    <property type="expression patterns" value="baseline and differential"/>
</dbReference>
<dbReference type="GO" id="GO:0030054">
    <property type="term" value="C:cell junction"/>
    <property type="evidence" value="ECO:0000314"/>
    <property type="project" value="HPA"/>
</dbReference>
<dbReference type="GO" id="GO:0005737">
    <property type="term" value="C:cytoplasm"/>
    <property type="evidence" value="ECO:0007669"/>
    <property type="project" value="UniProtKB-SubCell"/>
</dbReference>
<dbReference type="GO" id="GO:0043231">
    <property type="term" value="C:intracellular membrane-bounded organelle"/>
    <property type="evidence" value="ECO:0000314"/>
    <property type="project" value="HPA"/>
</dbReference>
<dbReference type="GO" id="GO:0005654">
    <property type="term" value="C:nucleoplasm"/>
    <property type="evidence" value="ECO:0000314"/>
    <property type="project" value="HPA"/>
</dbReference>
<dbReference type="GO" id="GO:0005634">
    <property type="term" value="C:nucleus"/>
    <property type="evidence" value="ECO:0000314"/>
    <property type="project" value="UniProtKB"/>
</dbReference>
<dbReference type="GO" id="GO:0000981">
    <property type="term" value="F:DNA-binding transcription factor activity, RNA polymerase II-specific"/>
    <property type="evidence" value="ECO:0000318"/>
    <property type="project" value="GO_Central"/>
</dbReference>
<dbReference type="GO" id="GO:0001227">
    <property type="term" value="F:DNA-binding transcription repressor activity, RNA polymerase II-specific"/>
    <property type="evidence" value="ECO:0000250"/>
    <property type="project" value="ARUK-UCL"/>
</dbReference>
<dbReference type="GO" id="GO:0042826">
    <property type="term" value="F:histone deacetylase binding"/>
    <property type="evidence" value="ECO:0000250"/>
    <property type="project" value="ARUK-UCL"/>
</dbReference>
<dbReference type="GO" id="GO:0000978">
    <property type="term" value="F:RNA polymerase II cis-regulatory region sequence-specific DNA binding"/>
    <property type="evidence" value="ECO:0000250"/>
    <property type="project" value="ARUK-UCL"/>
</dbReference>
<dbReference type="GO" id="GO:0045892">
    <property type="term" value="P:negative regulation of DNA-templated transcription"/>
    <property type="evidence" value="ECO:0000315"/>
    <property type="project" value="UniProtKB"/>
</dbReference>
<dbReference type="GO" id="GO:0008284">
    <property type="term" value="P:positive regulation of cell population proliferation"/>
    <property type="evidence" value="ECO:0000315"/>
    <property type="project" value="UniProtKB"/>
</dbReference>
<dbReference type="GO" id="GO:0006357">
    <property type="term" value="P:regulation of transcription by RNA polymerase II"/>
    <property type="evidence" value="ECO:0000318"/>
    <property type="project" value="GO_Central"/>
</dbReference>
<dbReference type="CDD" id="cd18290">
    <property type="entry name" value="BTB_POZ_BTBD14B_NAC1"/>
    <property type="match status" value="1"/>
</dbReference>
<dbReference type="FunFam" id="1.10.10.2590:FF:000002">
    <property type="entry name" value="Putative nucleus accumbens-associated protein 2"/>
    <property type="match status" value="1"/>
</dbReference>
<dbReference type="FunFam" id="3.30.710.10:FF:000009">
    <property type="entry name" value="Zinc finger and BTB domain-containing 37"/>
    <property type="match status" value="1"/>
</dbReference>
<dbReference type="Gene3D" id="1.10.10.2590">
    <property type="entry name" value="BEN domain"/>
    <property type="match status" value="1"/>
</dbReference>
<dbReference type="Gene3D" id="3.30.710.10">
    <property type="entry name" value="Potassium Channel Kv1.1, Chain A"/>
    <property type="match status" value="1"/>
</dbReference>
<dbReference type="InterPro" id="IPR018379">
    <property type="entry name" value="BEN_domain"/>
</dbReference>
<dbReference type="InterPro" id="IPR000210">
    <property type="entry name" value="BTB/POZ_dom"/>
</dbReference>
<dbReference type="InterPro" id="IPR011333">
    <property type="entry name" value="SKP1/BTB/POZ_sf"/>
</dbReference>
<dbReference type="InterPro" id="IPR050457">
    <property type="entry name" value="ZnFinger_BTB_dom_contain"/>
</dbReference>
<dbReference type="PANTHER" id="PTHR46105">
    <property type="entry name" value="AGAP004733-PA"/>
    <property type="match status" value="1"/>
</dbReference>
<dbReference type="PANTHER" id="PTHR46105:SF3">
    <property type="entry name" value="NUCLEUS ACCUMBENS-ASSOCIATED PROTEIN 1"/>
    <property type="match status" value="1"/>
</dbReference>
<dbReference type="Pfam" id="PF10523">
    <property type="entry name" value="BEN"/>
    <property type="match status" value="1"/>
</dbReference>
<dbReference type="Pfam" id="PF00651">
    <property type="entry name" value="BTB"/>
    <property type="match status" value="1"/>
</dbReference>
<dbReference type="SMART" id="SM01025">
    <property type="entry name" value="BEN"/>
    <property type="match status" value="1"/>
</dbReference>
<dbReference type="SMART" id="SM00225">
    <property type="entry name" value="BTB"/>
    <property type="match status" value="1"/>
</dbReference>
<dbReference type="SUPFAM" id="SSF54695">
    <property type="entry name" value="POZ domain"/>
    <property type="match status" value="1"/>
</dbReference>
<dbReference type="PROSITE" id="PS51457">
    <property type="entry name" value="BEN"/>
    <property type="match status" value="1"/>
</dbReference>
<dbReference type="PROSITE" id="PS50097">
    <property type="entry name" value="BTB"/>
    <property type="match status" value="1"/>
</dbReference>
<proteinExistence type="evidence at protein level"/>
<comment type="function">
    <text evidence="6 8">Functions as a transcriptional repressor. Seems to function as a transcriptional corepressor in neuronal cells through recruitment of HDAC3 and HDAC4. Contributes to tumor progression, and tumor cell proliferation and survival. This may be mediated at least in part through repressing transcriptional activity of GADD45GIP1. Required for recruiting the proteasome from the nucleus to the cytoplasm and dendritic spines.</text>
</comment>
<comment type="subunit">
    <text>Homooligomer; mediated by the BTB domain. Interacts with HDAC3 and HDAC4. Interacts (via BTB domain) with CUL3, PSMD7 and RCOR1.</text>
</comment>
<comment type="interaction">
    <interactant intactId="EBI-7950997">
        <id>Q96RE7</id>
    </interactant>
    <interactant intactId="EBI-715389">
        <id>Q9H7E9</id>
        <label>C8orf33</label>
    </interactant>
    <organismsDiffer>false</organismsDiffer>
    <experiments>3</experiments>
</comment>
<comment type="interaction">
    <interactant intactId="EBI-7950997">
        <id>Q96RE7</id>
    </interactant>
    <interactant intactId="EBI-2339219">
        <id>Q08426</id>
        <label>EHHADH</label>
    </interactant>
    <organismsDiffer>false</organismsDiffer>
    <experiments>3</experiments>
</comment>
<comment type="interaction">
    <interactant intactId="EBI-7950997">
        <id>Q96RE7</id>
    </interactant>
    <interactant intactId="EBI-742350">
        <id>Q14241</id>
        <label>ELOA</label>
    </interactant>
    <organismsDiffer>false</organismsDiffer>
    <experiments>3</experiments>
</comment>
<comment type="interaction">
    <interactant intactId="EBI-7950997">
        <id>Q96RE7</id>
    </interactant>
    <interactant intactId="EBI-12069522">
        <id>O00214-2</id>
        <label>LGALS8</label>
    </interactant>
    <organismsDiffer>false</organismsDiffer>
    <experiments>3</experiments>
</comment>
<comment type="interaction">
    <interactant intactId="EBI-7950997">
        <id>Q96RE7</id>
    </interactant>
    <interactant intactId="EBI-348239">
        <id>P62310</id>
        <label>LSM3</label>
    </interactant>
    <organismsDiffer>false</organismsDiffer>
    <experiments>3</experiments>
</comment>
<comment type="interaction">
    <interactant intactId="EBI-7950997">
        <id>Q96RE7</id>
    </interactant>
    <interactant intactId="EBI-359527">
        <id>P62875</id>
        <label>POLR2L</label>
    </interactant>
    <organismsDiffer>false</organismsDiffer>
    <experiments>3</experiments>
</comment>
<comment type="interaction">
    <interactant intactId="EBI-7950997">
        <id>Q96RE7</id>
    </interactant>
    <interactant intactId="EBI-286199">
        <id>P41743</id>
        <label>PRKCI</label>
    </interactant>
    <organismsDiffer>false</organismsDiffer>
    <experiments>3</experiments>
</comment>
<comment type="interaction">
    <interactant intactId="EBI-7950997">
        <id>Q96RE7</id>
    </interactant>
    <interactant intactId="EBI-2798416">
        <id>Q99633</id>
        <label>PRPF18</label>
    </interactant>
    <organismsDiffer>false</organismsDiffer>
    <experiments>3</experiments>
</comment>
<comment type="interaction">
    <interactant intactId="EBI-7950997">
        <id>Q96RE7</id>
    </interactant>
    <interactant intactId="EBI-744322">
        <id>O43395</id>
        <label>PRPF3</label>
    </interactant>
    <organismsDiffer>false</organismsDiffer>
    <experiments>3</experiments>
</comment>
<comment type="interaction">
    <interactant intactId="EBI-7950997">
        <id>Q96RE7</id>
    </interactant>
    <interactant intactId="EBI-17208936">
        <id>P0CB47</id>
        <label>UBTFL1</label>
    </interactant>
    <organismsDiffer>false</organismsDiffer>
    <experiments>3</experiments>
</comment>
<comment type="interaction">
    <interactant intactId="EBI-7950997">
        <id>Q96RE7</id>
    </interactant>
    <interactant intactId="EBI-395708">
        <id>Q96C00</id>
        <label>ZBTB9</label>
    </interactant>
    <organismsDiffer>false</organismsDiffer>
    <experiments>2</experiments>
</comment>
<comment type="interaction">
    <interactant intactId="EBI-7950997">
        <id>Q96RE7</id>
    </interactant>
    <interactant intactId="EBI-1049952">
        <id>Q96KM6</id>
        <label>ZNF512B</label>
    </interactant>
    <organismsDiffer>false</organismsDiffer>
    <experiments>3</experiments>
</comment>
<comment type="subcellular location">
    <subcellularLocation>
        <location>Nucleus</location>
    </subcellularLocation>
    <subcellularLocation>
        <location>Cytoplasm</location>
    </subcellularLocation>
    <text evidence="1">Distribution in the cytoplasm is dependent on phosphorylation.</text>
</comment>
<comment type="tissue specificity">
    <text evidence="6 7">Overexpressed in several types of carcinomas including ovarian serous carcinomas. Expression levels positively correlate with tumor recurrence in ovarian serous carcinomas, and intense immunoreactivity in primary ovarian tumors predicts early recurrence. Up-regulated in ovarian carcinomas after chemotherapy, suggesting a role in development of chemotherapy resistance in ovarian cancer.</text>
</comment>
<comment type="disease" evidence="9">
    <disease id="DI-04969">
        <name>Neurodevelopmental disorder with epilepsy, cataracts, feeding difficulties, and delayed brain myelination</name>
        <acronym>NECFM</acronym>
        <description>A neurodevelopmental disorder characterized by microcephaly, profound developmental delay, intellectual disability, cataracts, severe epilepsy including infantile spasms, irritability, failure to thrive, and stereotypic hand movements. Brain imaging reveals delayed myelination and cerebral atrophy.</description>
        <dbReference type="MIM" id="617393"/>
    </disease>
    <text>The disease is caused by variants affecting the gene represented in this entry.</text>
</comment>
<comment type="online information" name="Atlas of Genetics and Cytogenetics in Oncology and Haematology">
    <link uri="https://atlasgeneticsoncology.org/gene/44511/NACC1"/>
</comment>
<comment type="online information" name="Undiagnosed Disease Network">
    <link uri="https://undiagnosed.hms.harvard.edu/genes/nacc1/"/>
    <text>NACC1</text>
</comment>